<proteinExistence type="inferred from homology"/>
<accession>C3KVN7</accession>
<feature type="chain" id="PRO_1000214246" description="Small ribosomal subunit protein uS8">
    <location>
        <begin position="1"/>
        <end position="132"/>
    </location>
</feature>
<keyword id="KW-0687">Ribonucleoprotein</keyword>
<keyword id="KW-0689">Ribosomal protein</keyword>
<keyword id="KW-0694">RNA-binding</keyword>
<keyword id="KW-0699">rRNA-binding</keyword>
<protein>
    <recommendedName>
        <fullName evidence="1">Small ribosomal subunit protein uS8</fullName>
    </recommendedName>
    <alternativeName>
        <fullName evidence="2">30S ribosomal protein S8</fullName>
    </alternativeName>
</protein>
<reference key="1">
    <citation type="submission" date="2008-05" db="EMBL/GenBank/DDBJ databases">
        <title>Genome sequence of Clostridium botulinum Ba4 strain 657.</title>
        <authorList>
            <person name="Shrivastava S."/>
            <person name="Brown J.L."/>
            <person name="Bruce D."/>
            <person name="Detter C."/>
            <person name="Munk C."/>
            <person name="Smith L.A."/>
            <person name="Smith T.J."/>
            <person name="Sutton G."/>
            <person name="Brettin T.S."/>
        </authorList>
    </citation>
    <scope>NUCLEOTIDE SEQUENCE [LARGE SCALE GENOMIC DNA]</scope>
    <source>
        <strain>657 / Type Ba4</strain>
    </source>
</reference>
<evidence type="ECO:0000255" key="1">
    <source>
        <dbReference type="HAMAP-Rule" id="MF_01302"/>
    </source>
</evidence>
<evidence type="ECO:0000305" key="2"/>
<gene>
    <name evidence="1" type="primary">rpsH</name>
    <name type="ordered locus">CLJ_B3775</name>
</gene>
<sequence length="132" mass="14791">MVMSDPIADLLTRIRNANVVRHEVVEVPSSNIKKAIANIMLTEGYIRDLEEYRDGSVDMLRISMKYGQNKERIITGLKRISKPGLRVYCRKDETPKVLNGLGVAVVSTSKGIVTDREARKLGVGGEVLCYIW</sequence>
<comment type="function">
    <text evidence="1">One of the primary rRNA binding proteins, it binds directly to 16S rRNA central domain where it helps coordinate assembly of the platform of the 30S subunit.</text>
</comment>
<comment type="subunit">
    <text evidence="1">Part of the 30S ribosomal subunit. Contacts proteins S5 and S12.</text>
</comment>
<comment type="similarity">
    <text evidence="1">Belongs to the universal ribosomal protein uS8 family.</text>
</comment>
<organism>
    <name type="scientific">Clostridium botulinum (strain 657 / Type Ba4)</name>
    <dbReference type="NCBI Taxonomy" id="515621"/>
    <lineage>
        <taxon>Bacteria</taxon>
        <taxon>Bacillati</taxon>
        <taxon>Bacillota</taxon>
        <taxon>Clostridia</taxon>
        <taxon>Eubacteriales</taxon>
        <taxon>Clostridiaceae</taxon>
        <taxon>Clostridium</taxon>
    </lineage>
</organism>
<name>RS8_CLOB6</name>
<dbReference type="EMBL" id="CP001083">
    <property type="protein sequence ID" value="ACQ51622.1"/>
    <property type="molecule type" value="Genomic_DNA"/>
</dbReference>
<dbReference type="RefSeq" id="WP_003360201.1">
    <property type="nucleotide sequence ID" value="NC_012658.1"/>
</dbReference>
<dbReference type="SMR" id="C3KVN7"/>
<dbReference type="GeneID" id="92940236"/>
<dbReference type="KEGG" id="cbi:CLJ_B3775"/>
<dbReference type="HOGENOM" id="CLU_098428_0_2_9"/>
<dbReference type="Proteomes" id="UP000002333">
    <property type="component" value="Chromosome"/>
</dbReference>
<dbReference type="GO" id="GO:1990904">
    <property type="term" value="C:ribonucleoprotein complex"/>
    <property type="evidence" value="ECO:0007669"/>
    <property type="project" value="UniProtKB-KW"/>
</dbReference>
<dbReference type="GO" id="GO:0005840">
    <property type="term" value="C:ribosome"/>
    <property type="evidence" value="ECO:0007669"/>
    <property type="project" value="UniProtKB-KW"/>
</dbReference>
<dbReference type="GO" id="GO:0019843">
    <property type="term" value="F:rRNA binding"/>
    <property type="evidence" value="ECO:0007669"/>
    <property type="project" value="UniProtKB-UniRule"/>
</dbReference>
<dbReference type="GO" id="GO:0003735">
    <property type="term" value="F:structural constituent of ribosome"/>
    <property type="evidence" value="ECO:0007669"/>
    <property type="project" value="InterPro"/>
</dbReference>
<dbReference type="GO" id="GO:0006412">
    <property type="term" value="P:translation"/>
    <property type="evidence" value="ECO:0007669"/>
    <property type="project" value="UniProtKB-UniRule"/>
</dbReference>
<dbReference type="FunFam" id="3.30.1370.30:FF:000002">
    <property type="entry name" value="30S ribosomal protein S8"/>
    <property type="match status" value="1"/>
</dbReference>
<dbReference type="FunFam" id="3.30.1490.10:FF:000001">
    <property type="entry name" value="30S ribosomal protein S8"/>
    <property type="match status" value="1"/>
</dbReference>
<dbReference type="Gene3D" id="3.30.1370.30">
    <property type="match status" value="1"/>
</dbReference>
<dbReference type="Gene3D" id="3.30.1490.10">
    <property type="match status" value="1"/>
</dbReference>
<dbReference type="HAMAP" id="MF_01302_B">
    <property type="entry name" value="Ribosomal_uS8_B"/>
    <property type="match status" value="1"/>
</dbReference>
<dbReference type="InterPro" id="IPR000630">
    <property type="entry name" value="Ribosomal_uS8"/>
</dbReference>
<dbReference type="InterPro" id="IPR047863">
    <property type="entry name" value="Ribosomal_uS8_CS"/>
</dbReference>
<dbReference type="InterPro" id="IPR035987">
    <property type="entry name" value="Ribosomal_uS8_sf"/>
</dbReference>
<dbReference type="NCBIfam" id="NF001109">
    <property type="entry name" value="PRK00136.1"/>
    <property type="match status" value="1"/>
</dbReference>
<dbReference type="PANTHER" id="PTHR11758">
    <property type="entry name" value="40S RIBOSOMAL PROTEIN S15A"/>
    <property type="match status" value="1"/>
</dbReference>
<dbReference type="Pfam" id="PF00410">
    <property type="entry name" value="Ribosomal_S8"/>
    <property type="match status" value="1"/>
</dbReference>
<dbReference type="SUPFAM" id="SSF56047">
    <property type="entry name" value="Ribosomal protein S8"/>
    <property type="match status" value="1"/>
</dbReference>
<dbReference type="PROSITE" id="PS00053">
    <property type="entry name" value="RIBOSOMAL_S8"/>
    <property type="match status" value="1"/>
</dbReference>